<keyword id="KW-0325">Glycoprotein</keyword>
<keyword id="KW-0408">Iron</keyword>
<keyword id="KW-0472">Membrane</keyword>
<keyword id="KW-0479">Metal-binding</keyword>
<keyword id="KW-0503">Monooxygenase</keyword>
<keyword id="KW-0560">Oxidoreductase</keyword>
<keyword id="KW-0812">Transmembrane</keyword>
<keyword id="KW-1133">Transmembrane helix</keyword>
<proteinExistence type="inferred from homology"/>
<accession>A0A0E3D8P0</accession>
<sequence length="515" mass="58664">MSALIIQLSRVVGTLREEAGFLWKYAAFMVFIYLLLPKPAYKTNVRVPTIKFMSPWLPGIISRLLFNSKAPSVIYDGYSKYKTSAYKLLKPDGDLVVLSTRYAEELRQLPASTLNALEATFSDHVGEYTTILTDSHLHTETIQKRLTPAIGRLIPRIISELDYAFQVEFPNCDNQFVAINSYEVFLRLVARVGARIFIGDELCREEKWLKASIDYTKNIFLTIALLRPFPGFLHPIVGRILPSSRSLDRQLVYIKEELLGPLINKRRSLEAVSDSNYEKPDDFLQWMMDLAKTEKESHPHNLAQRLLGITSMAVVHTSAMSMTHILYDLLVMPQWVQPLRDEIQTEIADWRSTTQSNLNNLRVMDSFLKESQRFNPPGELSFHRVVKHDLTLSDGLLLPKGTHICMAAGPISMDPEVVENPDVFDAFRFVKEKVPTSGFVSTGPSHMHFGLGRYACPGRFFASIVMKLILSRFLAQYEFHFAPDQTERPRNLLIGDKIVPNVSTPIFIKNRAPEI</sequence>
<gene>
    <name evidence="5" type="primary">janP</name>
</gene>
<comment type="function">
    <text evidence="4 7">Cytochrome P450 monooxygenase; part of the gene cluster that mediates the biosynthesis of the indole diterpenes janthitremanes such as shearinine K or shearinine A (PubMed:26213965). The geranylgeranyl diphosphate (GGPP) synthase janG catalyzes the first step in janthitremane biosynthesis via conversion of farnesyl pyrophosphate and isopentyl pyrophosphate into geranylgeranyl pyrophosphate (GGPP) (PubMed:26213965). Condensation of indole-3-glycerol phosphate with GGPP by the prenyl transferase janC then forms 3-geranylgeranylindole (3-GGI) (PubMed:26213965). Epoxidation by the FAD-dependent monooxygenase janM leads to a epoxidized-GGI that is substrate of the terpene cyclase janB for cyclization to yield paspaline (PubMed:26213965). Paspaline is subsequently converted to 13-desoxypaspaline by the cytochrome P450 monooxygenase janP, via beta-PC-M6 in a series of alpha-face oxidations (Probable). The cytochrome P450 monooxygenase janQ is proposed to carry out sequential beta-face oxidation steps at C-7 and C-13 of 13-desoxypaspaline to form paspalicine and paspalinine respectively (Probable). The indole diterpene prenyltransferase janD may then convert paspalinine into shearinine K which is substrate of janO and/or additional enzymes for oxidation and cyclization to generate shearinine A (Probable).</text>
</comment>
<comment type="cofactor">
    <cofactor evidence="1">
        <name>heme</name>
        <dbReference type="ChEBI" id="CHEBI:30413"/>
    </cofactor>
</comment>
<comment type="pathway">
    <text evidence="4">Secondary metabolite biosynthesis.</text>
</comment>
<comment type="subcellular location">
    <subcellularLocation>
        <location evidence="2">Membrane</location>
        <topology evidence="2">Single-pass membrane protein</topology>
    </subcellularLocation>
</comment>
<comment type="disruption phenotype">
    <text evidence="4">Abolishes the production of the janthitremanes shearinine A, F or K as well as of 13-desoxypaxilline.</text>
</comment>
<comment type="similarity">
    <text evidence="6">Belongs to the cytochrome P450 family.</text>
</comment>
<protein>
    <recommendedName>
        <fullName evidence="5">Cytochrome P450 monooxygenase janP</fullName>
        <ecNumber evidence="7">1.-.-.-</ecNumber>
    </recommendedName>
    <alternativeName>
        <fullName evidence="5">Janthitremanes biosynthesis cluster protein P</fullName>
    </alternativeName>
</protein>
<dbReference type="EC" id="1.-.-.-" evidence="7"/>
<dbReference type="EMBL" id="KF280651">
    <property type="protein sequence ID" value="AGZ20476.1"/>
    <property type="molecule type" value="Genomic_DNA"/>
</dbReference>
<dbReference type="SMR" id="A0A0E3D8P0"/>
<dbReference type="GlyCosmos" id="A0A0E3D8P0">
    <property type="glycosylation" value="1 site, No reported glycans"/>
</dbReference>
<dbReference type="GO" id="GO:0016020">
    <property type="term" value="C:membrane"/>
    <property type="evidence" value="ECO:0007669"/>
    <property type="project" value="UniProtKB-SubCell"/>
</dbReference>
<dbReference type="GO" id="GO:0020037">
    <property type="term" value="F:heme binding"/>
    <property type="evidence" value="ECO:0007669"/>
    <property type="project" value="InterPro"/>
</dbReference>
<dbReference type="GO" id="GO:0005506">
    <property type="term" value="F:iron ion binding"/>
    <property type="evidence" value="ECO:0007669"/>
    <property type="project" value="InterPro"/>
</dbReference>
<dbReference type="GO" id="GO:0004497">
    <property type="term" value="F:monooxygenase activity"/>
    <property type="evidence" value="ECO:0007669"/>
    <property type="project" value="UniProtKB-KW"/>
</dbReference>
<dbReference type="GO" id="GO:0016705">
    <property type="term" value="F:oxidoreductase activity, acting on paired donors, with incorporation or reduction of molecular oxygen"/>
    <property type="evidence" value="ECO:0007669"/>
    <property type="project" value="InterPro"/>
</dbReference>
<dbReference type="GO" id="GO:0043386">
    <property type="term" value="P:mycotoxin biosynthetic process"/>
    <property type="evidence" value="ECO:0007669"/>
    <property type="project" value="UniProtKB-ARBA"/>
</dbReference>
<dbReference type="CDD" id="cd11041">
    <property type="entry name" value="CYP503A1-like"/>
    <property type="match status" value="1"/>
</dbReference>
<dbReference type="Gene3D" id="1.10.630.10">
    <property type="entry name" value="Cytochrome P450"/>
    <property type="match status" value="1"/>
</dbReference>
<dbReference type="InterPro" id="IPR001128">
    <property type="entry name" value="Cyt_P450"/>
</dbReference>
<dbReference type="InterPro" id="IPR002403">
    <property type="entry name" value="Cyt_P450_E_grp-IV"/>
</dbReference>
<dbReference type="InterPro" id="IPR036396">
    <property type="entry name" value="Cyt_P450_sf"/>
</dbReference>
<dbReference type="PANTHER" id="PTHR46206">
    <property type="entry name" value="CYTOCHROME P450"/>
    <property type="match status" value="1"/>
</dbReference>
<dbReference type="PANTHER" id="PTHR46206:SF7">
    <property type="entry name" value="P450, PUTATIVE (EUROFUNG)-RELATED"/>
    <property type="match status" value="1"/>
</dbReference>
<dbReference type="Pfam" id="PF00067">
    <property type="entry name" value="p450"/>
    <property type="match status" value="1"/>
</dbReference>
<dbReference type="PRINTS" id="PR00465">
    <property type="entry name" value="EP450IV"/>
</dbReference>
<dbReference type="SUPFAM" id="SSF48264">
    <property type="entry name" value="Cytochrome P450"/>
    <property type="match status" value="1"/>
</dbReference>
<feature type="chain" id="PRO_0000446571" description="Cytochrome P450 monooxygenase janP">
    <location>
        <begin position="1"/>
        <end position="515"/>
    </location>
</feature>
<feature type="transmembrane region" description="Helical" evidence="2">
    <location>
        <begin position="20"/>
        <end position="36"/>
    </location>
</feature>
<feature type="binding site" description="axial binding residue" evidence="1">
    <location>
        <position position="456"/>
    </location>
    <ligand>
        <name>heme</name>
        <dbReference type="ChEBI" id="CHEBI:30413"/>
    </ligand>
    <ligandPart>
        <name>Fe</name>
        <dbReference type="ChEBI" id="CHEBI:18248"/>
    </ligandPart>
</feature>
<feature type="glycosylation site" description="N-linked (GlcNAc...) asparagine" evidence="3">
    <location>
        <position position="501"/>
    </location>
</feature>
<name>JANP_PENJA</name>
<organism>
    <name type="scientific">Penicillium janthinellum</name>
    <name type="common">Penicillium vitale</name>
    <dbReference type="NCBI Taxonomy" id="5079"/>
    <lineage>
        <taxon>Eukaryota</taxon>
        <taxon>Fungi</taxon>
        <taxon>Dikarya</taxon>
        <taxon>Ascomycota</taxon>
        <taxon>Pezizomycotina</taxon>
        <taxon>Eurotiomycetes</taxon>
        <taxon>Eurotiomycetidae</taxon>
        <taxon>Eurotiales</taxon>
        <taxon>Aspergillaceae</taxon>
        <taxon>Penicillium</taxon>
    </lineage>
</organism>
<evidence type="ECO:0000250" key="1">
    <source>
        <dbReference type="UniProtKB" id="P04798"/>
    </source>
</evidence>
<evidence type="ECO:0000255" key="2"/>
<evidence type="ECO:0000255" key="3">
    <source>
        <dbReference type="PROSITE-ProRule" id="PRU00498"/>
    </source>
</evidence>
<evidence type="ECO:0000269" key="4">
    <source>
    </source>
</evidence>
<evidence type="ECO:0000303" key="5">
    <source>
    </source>
</evidence>
<evidence type="ECO:0000305" key="6"/>
<evidence type="ECO:0000305" key="7">
    <source>
    </source>
</evidence>
<reference key="1">
    <citation type="journal article" date="2015" name="Toxins">
        <title>Molecular cloning and functional analysis of gene clusters for the biosynthesis of indole-diterpenes in Penicillium crustosum and P. janthinellum.</title>
        <authorList>
            <person name="Nicholson M.J."/>
            <person name="Eaton C.J."/>
            <person name="Starkel C."/>
            <person name="Tapper B.A."/>
            <person name="Cox M.P."/>
            <person name="Scott B."/>
        </authorList>
    </citation>
    <scope>NUCLEOTIDE SEQUENCE [GENOMIC DNA]</scope>
    <scope>IDENTIFICATION</scope>
    <scope>FUNCTION</scope>
    <scope>DISRUPTION PHENOTYPE</scope>
    <scope>PATHWAY</scope>
    <source>
        <strain>PN2408</strain>
    </source>
</reference>